<organism>
    <name type="scientific">Arabidopsis thaliana</name>
    <name type="common">Mouse-ear cress</name>
    <dbReference type="NCBI Taxonomy" id="3702"/>
    <lineage>
        <taxon>Eukaryota</taxon>
        <taxon>Viridiplantae</taxon>
        <taxon>Streptophyta</taxon>
        <taxon>Embryophyta</taxon>
        <taxon>Tracheophyta</taxon>
        <taxon>Spermatophyta</taxon>
        <taxon>Magnoliopsida</taxon>
        <taxon>eudicotyledons</taxon>
        <taxon>Gunneridae</taxon>
        <taxon>Pentapetalae</taxon>
        <taxon>rosids</taxon>
        <taxon>malvids</taxon>
        <taxon>Brassicales</taxon>
        <taxon>Brassicaceae</taxon>
        <taxon>Camelineae</taxon>
        <taxon>Arabidopsis</taxon>
    </lineage>
</organism>
<proteinExistence type="evidence at protein level"/>
<keyword id="KW-0007">Acetylation</keyword>
<keyword id="KW-0024">Alternative initiation</keyword>
<keyword id="KW-0101">Branched-chain amino acid catabolism</keyword>
<keyword id="KW-0496">Mitochondrion</keyword>
<keyword id="KW-0520">NAD</keyword>
<keyword id="KW-0560">Oxidoreductase</keyword>
<keyword id="KW-1185">Reference proteome</keyword>
<keyword id="KW-0809">Transit peptide</keyword>
<dbReference type="EC" id="1.1.1.31"/>
<dbReference type="EMBL" id="AL078470">
    <property type="protein sequence ID" value="CAB43926.1"/>
    <property type="molecule type" value="Genomic_DNA"/>
</dbReference>
<dbReference type="EMBL" id="AL161574">
    <property type="protein sequence ID" value="CAB79670.1"/>
    <property type="molecule type" value="Genomic_DNA"/>
</dbReference>
<dbReference type="EMBL" id="CP002687">
    <property type="protein sequence ID" value="AEE85589.1"/>
    <property type="molecule type" value="Genomic_DNA"/>
</dbReference>
<dbReference type="EMBL" id="AF370197">
    <property type="protein sequence ID" value="AAK44012.1"/>
    <property type="molecule type" value="mRNA"/>
</dbReference>
<dbReference type="EMBL" id="AY062952">
    <property type="protein sequence ID" value="AAL33784.1"/>
    <property type="molecule type" value="mRNA"/>
</dbReference>
<dbReference type="PIR" id="T08967">
    <property type="entry name" value="T08967"/>
</dbReference>
<dbReference type="RefSeq" id="NP_194641.1">
    <molecule id="Q9SZE1-1"/>
    <property type="nucleotide sequence ID" value="NM_119056.2"/>
</dbReference>
<dbReference type="SMR" id="Q9SZE1"/>
<dbReference type="BioGRID" id="14320">
    <property type="interactions" value="2"/>
</dbReference>
<dbReference type="FunCoup" id="Q9SZE1">
    <property type="interactions" value="757"/>
</dbReference>
<dbReference type="IntAct" id="Q9SZE1">
    <property type="interactions" value="2"/>
</dbReference>
<dbReference type="STRING" id="3702.Q9SZE1"/>
<dbReference type="iPTMnet" id="Q9SZE1"/>
<dbReference type="PaxDb" id="3702-AT4G29120.1"/>
<dbReference type="ProteomicsDB" id="245106">
    <molecule id="Q9SZE1-1"/>
</dbReference>
<dbReference type="EnsemblPlants" id="AT4G29120.1">
    <molecule id="Q9SZE1-1"/>
    <property type="protein sequence ID" value="AT4G29120.1"/>
    <property type="gene ID" value="AT4G29120"/>
</dbReference>
<dbReference type="GeneID" id="829033"/>
<dbReference type="Gramene" id="AT4G29120.1">
    <molecule id="Q9SZE1-1"/>
    <property type="protein sequence ID" value="AT4G29120.1"/>
    <property type="gene ID" value="AT4G29120"/>
</dbReference>
<dbReference type="KEGG" id="ath:AT4G29120"/>
<dbReference type="Araport" id="AT4G29120"/>
<dbReference type="TAIR" id="AT4G29120"/>
<dbReference type="eggNOG" id="KOG0409">
    <property type="taxonomic scope" value="Eukaryota"/>
</dbReference>
<dbReference type="HOGENOM" id="CLU_035117_1_0_1"/>
<dbReference type="InParanoid" id="Q9SZE1"/>
<dbReference type="OMA" id="QFYADVQ"/>
<dbReference type="OrthoDB" id="435038at2759"/>
<dbReference type="PhylomeDB" id="Q9SZE1"/>
<dbReference type="BioCyc" id="ARA:AT4G29120-MONOMER"/>
<dbReference type="UniPathway" id="UPA00362"/>
<dbReference type="PRO" id="PR:Q9SZE1"/>
<dbReference type="Proteomes" id="UP000006548">
    <property type="component" value="Chromosome 4"/>
</dbReference>
<dbReference type="ExpressionAtlas" id="Q9SZE1">
    <property type="expression patterns" value="baseline and differential"/>
</dbReference>
<dbReference type="GO" id="GO:0005739">
    <property type="term" value="C:mitochondrion"/>
    <property type="evidence" value="ECO:0007669"/>
    <property type="project" value="UniProtKB-SubCell"/>
</dbReference>
<dbReference type="GO" id="GO:0008442">
    <property type="term" value="F:3-hydroxyisobutyrate dehydrogenase activity"/>
    <property type="evidence" value="ECO:0007669"/>
    <property type="project" value="UniProtKB-EC"/>
</dbReference>
<dbReference type="GO" id="GO:0051287">
    <property type="term" value="F:NAD binding"/>
    <property type="evidence" value="ECO:0007669"/>
    <property type="project" value="InterPro"/>
</dbReference>
<dbReference type="GO" id="GO:0050661">
    <property type="term" value="F:NADP binding"/>
    <property type="evidence" value="ECO:0007669"/>
    <property type="project" value="InterPro"/>
</dbReference>
<dbReference type="GO" id="GO:0006574">
    <property type="term" value="P:valine catabolic process"/>
    <property type="evidence" value="ECO:0007669"/>
    <property type="project" value="UniProtKB-UniPathway"/>
</dbReference>
<dbReference type="FunFam" id="1.10.1040.10:FF:000050">
    <property type="entry name" value="Probable 3-hydroxyisobutyrate dehydrogenase-like 1, mitochondrial"/>
    <property type="match status" value="1"/>
</dbReference>
<dbReference type="FunFam" id="3.40.50.720:FF:001269">
    <property type="entry name" value="Probable 3-hydroxyisobutyrate dehydrogenase-like 1, mitochondrial"/>
    <property type="match status" value="1"/>
</dbReference>
<dbReference type="Gene3D" id="1.10.1040.10">
    <property type="entry name" value="N-(1-d-carboxylethyl)-l-norvaline Dehydrogenase, domain 2"/>
    <property type="match status" value="1"/>
</dbReference>
<dbReference type="Gene3D" id="3.40.50.720">
    <property type="entry name" value="NAD(P)-binding Rossmann-like Domain"/>
    <property type="match status" value="1"/>
</dbReference>
<dbReference type="InterPro" id="IPR008927">
    <property type="entry name" value="6-PGluconate_DH-like_C_sf"/>
</dbReference>
<dbReference type="InterPro" id="IPR013328">
    <property type="entry name" value="6PGD_dom2"/>
</dbReference>
<dbReference type="InterPro" id="IPR006115">
    <property type="entry name" value="6PGDH_NADP-bd"/>
</dbReference>
<dbReference type="InterPro" id="IPR029154">
    <property type="entry name" value="HIBADH-like_NADP-bd"/>
</dbReference>
<dbReference type="InterPro" id="IPR015815">
    <property type="entry name" value="HIBADH-related"/>
</dbReference>
<dbReference type="InterPro" id="IPR036291">
    <property type="entry name" value="NAD(P)-bd_dom_sf"/>
</dbReference>
<dbReference type="PANTHER" id="PTHR43060">
    <property type="entry name" value="3-HYDROXYISOBUTYRATE DEHYDROGENASE-LIKE 1, MITOCHONDRIAL-RELATED"/>
    <property type="match status" value="1"/>
</dbReference>
<dbReference type="PANTHER" id="PTHR43060:SF15">
    <property type="entry name" value="3-HYDROXYISOBUTYRATE DEHYDROGENASE-LIKE 1, MITOCHONDRIAL-RELATED"/>
    <property type="match status" value="1"/>
</dbReference>
<dbReference type="Pfam" id="PF14833">
    <property type="entry name" value="NAD_binding_11"/>
    <property type="match status" value="1"/>
</dbReference>
<dbReference type="Pfam" id="PF03446">
    <property type="entry name" value="NAD_binding_2"/>
    <property type="match status" value="1"/>
</dbReference>
<dbReference type="PIRSF" id="PIRSF000103">
    <property type="entry name" value="HIBADH"/>
    <property type="match status" value="1"/>
</dbReference>
<dbReference type="SUPFAM" id="SSF48179">
    <property type="entry name" value="6-phosphogluconate dehydrogenase C-terminal domain-like"/>
    <property type="match status" value="1"/>
</dbReference>
<dbReference type="SUPFAM" id="SSF51735">
    <property type="entry name" value="NAD(P)-binding Rossmann-fold domains"/>
    <property type="match status" value="1"/>
</dbReference>
<feature type="transit peptide" description="Mitochondrion" evidence="2 4">
    <location>
        <begin position="1"/>
        <end position="23"/>
    </location>
</feature>
<feature type="chain" id="PRO_0000421117" description="Probable 3-hydroxyisobutyrate dehydrogenase-like 1, mitochondrial">
    <location>
        <begin position="24"/>
        <end position="334"/>
    </location>
</feature>
<feature type="active site" evidence="1">
    <location>
        <position position="207"/>
    </location>
</feature>
<feature type="binding site" evidence="1">
    <location>
        <begin position="38"/>
        <end position="67"/>
    </location>
    <ligand>
        <name>NAD(+)</name>
        <dbReference type="ChEBI" id="CHEBI:57540"/>
    </ligand>
</feature>
<feature type="binding site" evidence="1">
    <location>
        <position position="133"/>
    </location>
    <ligand>
        <name>NAD(+)</name>
        <dbReference type="ChEBI" id="CHEBI:57540"/>
    </ligand>
</feature>
<feature type="binding site" evidence="1">
    <location>
        <position position="275"/>
    </location>
    <ligand>
        <name>NAD(+)</name>
        <dbReference type="ChEBI" id="CHEBI:57540"/>
    </ligand>
</feature>
<feature type="modified residue" description="N-acetylalanine" evidence="4">
    <location>
        <position position="24"/>
    </location>
</feature>
<feature type="splice variant" id="VSP_057959" description="In isoform 2.">
    <location>
        <begin position="1"/>
        <end position="22"/>
    </location>
</feature>
<sequence>MPLLLRRFPSPSVVSSFFLRRSMASSTISSDIITPSNTKIGWIGTGVMGRSMCGHLIKAGYTVTVFNRTISKAQTLIDMGANVADSPNSVAEQSDVVFTIVGYPSDVRHVLLDPKSGALSGLRQGGVLVDMTTSEPSLAEEIAKAASFKNCFSIDAPVSGGDLGAKNGKLSIFAGGDETTVKRLDPLFSLMGKVNFMGTSGKGQFAKLANQITIASTMLGLVEGLIYAHKAGLDVKKFLEAISTGAAGSKSIDLYGDRILKRDFDPGFYVNHFVKDLGICLNECQRMGLALPGLALAQQLYLSLKAHGEGDLGTQALLLALERLNNVSVQSSDS</sequence>
<gene>
    <name type="ordered locus">At4g29120</name>
    <name type="ORF">F19B15.150</name>
</gene>
<protein>
    <recommendedName>
        <fullName>Probable 3-hydroxyisobutyrate dehydrogenase-like 1, mitochondrial</fullName>
        <shortName>HIBADH-like</shortName>
        <ecNumber>1.1.1.31</ecNumber>
    </recommendedName>
</protein>
<accession>Q9SZE1</accession>
<name>3HID1_ARATH</name>
<evidence type="ECO:0000250" key="1"/>
<evidence type="ECO:0000255" key="2"/>
<evidence type="ECO:0000305" key="3"/>
<evidence type="ECO:0007744" key="4">
    <source>
    </source>
</evidence>
<reference key="1">
    <citation type="journal article" date="1999" name="Nature">
        <title>Sequence and analysis of chromosome 4 of the plant Arabidopsis thaliana.</title>
        <authorList>
            <person name="Mayer K.F.X."/>
            <person name="Schueller C."/>
            <person name="Wambutt R."/>
            <person name="Murphy G."/>
            <person name="Volckaert G."/>
            <person name="Pohl T."/>
            <person name="Duesterhoeft A."/>
            <person name="Stiekema W."/>
            <person name="Entian K.-D."/>
            <person name="Terryn N."/>
            <person name="Harris B."/>
            <person name="Ansorge W."/>
            <person name="Brandt P."/>
            <person name="Grivell L.A."/>
            <person name="Rieger M."/>
            <person name="Weichselgartner M."/>
            <person name="de Simone V."/>
            <person name="Obermaier B."/>
            <person name="Mache R."/>
            <person name="Mueller M."/>
            <person name="Kreis M."/>
            <person name="Delseny M."/>
            <person name="Puigdomenech P."/>
            <person name="Watson M."/>
            <person name="Schmidtheini T."/>
            <person name="Reichert B."/>
            <person name="Portetelle D."/>
            <person name="Perez-Alonso M."/>
            <person name="Boutry M."/>
            <person name="Bancroft I."/>
            <person name="Vos P."/>
            <person name="Hoheisel J."/>
            <person name="Zimmermann W."/>
            <person name="Wedler H."/>
            <person name="Ridley P."/>
            <person name="Langham S.-A."/>
            <person name="McCullagh B."/>
            <person name="Bilham L."/>
            <person name="Robben J."/>
            <person name="van der Schueren J."/>
            <person name="Grymonprez B."/>
            <person name="Chuang Y.-J."/>
            <person name="Vandenbussche F."/>
            <person name="Braeken M."/>
            <person name="Weltjens I."/>
            <person name="Voet M."/>
            <person name="Bastiaens I."/>
            <person name="Aert R."/>
            <person name="Defoor E."/>
            <person name="Weitzenegger T."/>
            <person name="Bothe G."/>
            <person name="Ramsperger U."/>
            <person name="Hilbert H."/>
            <person name="Braun M."/>
            <person name="Holzer E."/>
            <person name="Brandt A."/>
            <person name="Peters S."/>
            <person name="van Staveren M."/>
            <person name="Dirkse W."/>
            <person name="Mooijman P."/>
            <person name="Klein Lankhorst R."/>
            <person name="Rose M."/>
            <person name="Hauf J."/>
            <person name="Koetter P."/>
            <person name="Berneiser S."/>
            <person name="Hempel S."/>
            <person name="Feldpausch M."/>
            <person name="Lamberth S."/>
            <person name="Van den Daele H."/>
            <person name="De Keyser A."/>
            <person name="Buysshaert C."/>
            <person name="Gielen J."/>
            <person name="Villarroel R."/>
            <person name="De Clercq R."/>
            <person name="van Montagu M."/>
            <person name="Rogers J."/>
            <person name="Cronin A."/>
            <person name="Quail M.A."/>
            <person name="Bray-Allen S."/>
            <person name="Clark L."/>
            <person name="Doggett J."/>
            <person name="Hall S."/>
            <person name="Kay M."/>
            <person name="Lennard N."/>
            <person name="McLay K."/>
            <person name="Mayes R."/>
            <person name="Pettett A."/>
            <person name="Rajandream M.A."/>
            <person name="Lyne M."/>
            <person name="Benes V."/>
            <person name="Rechmann S."/>
            <person name="Borkova D."/>
            <person name="Bloecker H."/>
            <person name="Scharfe M."/>
            <person name="Grimm M."/>
            <person name="Loehnert T.-H."/>
            <person name="Dose S."/>
            <person name="de Haan M."/>
            <person name="Maarse A.C."/>
            <person name="Schaefer M."/>
            <person name="Mueller-Auer S."/>
            <person name="Gabel C."/>
            <person name="Fuchs M."/>
            <person name="Fartmann B."/>
            <person name="Granderath K."/>
            <person name="Dauner D."/>
            <person name="Herzl A."/>
            <person name="Neumann S."/>
            <person name="Argiriou A."/>
            <person name="Vitale D."/>
            <person name="Liguori R."/>
            <person name="Piravandi E."/>
            <person name="Massenet O."/>
            <person name="Quigley F."/>
            <person name="Clabauld G."/>
            <person name="Muendlein A."/>
            <person name="Felber R."/>
            <person name="Schnabl S."/>
            <person name="Hiller R."/>
            <person name="Schmidt W."/>
            <person name="Lecharny A."/>
            <person name="Aubourg S."/>
            <person name="Chefdor F."/>
            <person name="Cooke R."/>
            <person name="Berger C."/>
            <person name="Monfort A."/>
            <person name="Casacuberta E."/>
            <person name="Gibbons T."/>
            <person name="Weber N."/>
            <person name="Vandenbol M."/>
            <person name="Bargues M."/>
            <person name="Terol J."/>
            <person name="Torres A."/>
            <person name="Perez-Perez A."/>
            <person name="Purnelle B."/>
            <person name="Bent E."/>
            <person name="Johnson S."/>
            <person name="Tacon D."/>
            <person name="Jesse T."/>
            <person name="Heijnen L."/>
            <person name="Schwarz S."/>
            <person name="Scholler P."/>
            <person name="Heber S."/>
            <person name="Francs P."/>
            <person name="Bielke C."/>
            <person name="Frishman D."/>
            <person name="Haase D."/>
            <person name="Lemcke K."/>
            <person name="Mewes H.-W."/>
            <person name="Stocker S."/>
            <person name="Zaccaria P."/>
            <person name="Bevan M."/>
            <person name="Wilson R.K."/>
            <person name="de la Bastide M."/>
            <person name="Habermann K."/>
            <person name="Parnell L."/>
            <person name="Dedhia N."/>
            <person name="Gnoj L."/>
            <person name="Schutz K."/>
            <person name="Huang E."/>
            <person name="Spiegel L."/>
            <person name="Sekhon M."/>
            <person name="Murray J."/>
            <person name="Sheet P."/>
            <person name="Cordes M."/>
            <person name="Abu-Threideh J."/>
            <person name="Stoneking T."/>
            <person name="Kalicki J."/>
            <person name="Graves T."/>
            <person name="Harmon G."/>
            <person name="Edwards J."/>
            <person name="Latreille P."/>
            <person name="Courtney L."/>
            <person name="Cloud J."/>
            <person name="Abbott A."/>
            <person name="Scott K."/>
            <person name="Johnson D."/>
            <person name="Minx P."/>
            <person name="Bentley D."/>
            <person name="Fulton B."/>
            <person name="Miller N."/>
            <person name="Greco T."/>
            <person name="Kemp K."/>
            <person name="Kramer J."/>
            <person name="Fulton L."/>
            <person name="Mardis E."/>
            <person name="Dante M."/>
            <person name="Pepin K."/>
            <person name="Hillier L.W."/>
            <person name="Nelson J."/>
            <person name="Spieth J."/>
            <person name="Ryan E."/>
            <person name="Andrews S."/>
            <person name="Geisel C."/>
            <person name="Layman D."/>
            <person name="Du H."/>
            <person name="Ali J."/>
            <person name="Berghoff A."/>
            <person name="Jones K."/>
            <person name="Drone K."/>
            <person name="Cotton M."/>
            <person name="Joshu C."/>
            <person name="Antonoiu B."/>
            <person name="Zidanic M."/>
            <person name="Strong C."/>
            <person name="Sun H."/>
            <person name="Lamar B."/>
            <person name="Yordan C."/>
            <person name="Ma P."/>
            <person name="Zhong J."/>
            <person name="Preston R."/>
            <person name="Vil D."/>
            <person name="Shekher M."/>
            <person name="Matero A."/>
            <person name="Shah R."/>
            <person name="Swaby I.K."/>
            <person name="O'Shaughnessy A."/>
            <person name="Rodriguez M."/>
            <person name="Hoffman J."/>
            <person name="Till S."/>
            <person name="Granat S."/>
            <person name="Shohdy N."/>
            <person name="Hasegawa A."/>
            <person name="Hameed A."/>
            <person name="Lodhi M."/>
            <person name="Johnson A."/>
            <person name="Chen E."/>
            <person name="Marra M.A."/>
            <person name="Martienssen R."/>
            <person name="McCombie W.R."/>
        </authorList>
    </citation>
    <scope>NUCLEOTIDE SEQUENCE [LARGE SCALE GENOMIC DNA]</scope>
    <source>
        <strain>cv. Columbia</strain>
    </source>
</reference>
<reference key="2">
    <citation type="journal article" date="2017" name="Plant J.">
        <title>Araport11: a complete reannotation of the Arabidopsis thaliana reference genome.</title>
        <authorList>
            <person name="Cheng C.Y."/>
            <person name="Krishnakumar V."/>
            <person name="Chan A.P."/>
            <person name="Thibaud-Nissen F."/>
            <person name="Schobel S."/>
            <person name="Town C.D."/>
        </authorList>
    </citation>
    <scope>GENOME REANNOTATION</scope>
    <source>
        <strain>cv. Columbia</strain>
    </source>
</reference>
<reference key="3">
    <citation type="journal article" date="2003" name="Science">
        <title>Empirical analysis of transcriptional activity in the Arabidopsis genome.</title>
        <authorList>
            <person name="Yamada K."/>
            <person name="Lim J."/>
            <person name="Dale J.M."/>
            <person name="Chen H."/>
            <person name="Shinn P."/>
            <person name="Palm C.J."/>
            <person name="Southwick A.M."/>
            <person name="Wu H.C."/>
            <person name="Kim C.J."/>
            <person name="Nguyen M."/>
            <person name="Pham P.K."/>
            <person name="Cheuk R.F."/>
            <person name="Karlin-Newmann G."/>
            <person name="Liu S.X."/>
            <person name="Lam B."/>
            <person name="Sakano H."/>
            <person name="Wu T."/>
            <person name="Yu G."/>
            <person name="Miranda M."/>
            <person name="Quach H.L."/>
            <person name="Tripp M."/>
            <person name="Chang C.H."/>
            <person name="Lee J.M."/>
            <person name="Toriumi M.J."/>
            <person name="Chan M.M."/>
            <person name="Tang C.C."/>
            <person name="Onodera C.S."/>
            <person name="Deng J.M."/>
            <person name="Akiyama K."/>
            <person name="Ansari Y."/>
            <person name="Arakawa T."/>
            <person name="Banh J."/>
            <person name="Banno F."/>
            <person name="Bowser L."/>
            <person name="Brooks S.Y."/>
            <person name="Carninci P."/>
            <person name="Chao Q."/>
            <person name="Choy N."/>
            <person name="Enju A."/>
            <person name="Goldsmith A.D."/>
            <person name="Gurjal M."/>
            <person name="Hansen N.F."/>
            <person name="Hayashizaki Y."/>
            <person name="Johnson-Hopson C."/>
            <person name="Hsuan V.W."/>
            <person name="Iida K."/>
            <person name="Karnes M."/>
            <person name="Khan S."/>
            <person name="Koesema E."/>
            <person name="Ishida J."/>
            <person name="Jiang P.X."/>
            <person name="Jones T."/>
            <person name="Kawai J."/>
            <person name="Kamiya A."/>
            <person name="Meyers C."/>
            <person name="Nakajima M."/>
            <person name="Narusaka M."/>
            <person name="Seki M."/>
            <person name="Sakurai T."/>
            <person name="Satou M."/>
            <person name="Tamse R."/>
            <person name="Vaysberg M."/>
            <person name="Wallender E.K."/>
            <person name="Wong C."/>
            <person name="Yamamura Y."/>
            <person name="Yuan S."/>
            <person name="Shinozaki K."/>
            <person name="Davis R.W."/>
            <person name="Theologis A."/>
            <person name="Ecker J.R."/>
        </authorList>
    </citation>
    <scope>NUCLEOTIDE SEQUENCE [LARGE SCALE MRNA]</scope>
    <source>
        <strain>cv. Columbia</strain>
    </source>
</reference>
<reference key="4">
    <citation type="journal article" date="2012" name="Mol. Cell. Proteomics">
        <title>Comparative large-scale characterisation of plant vs. mammal proteins reveals similar and idiosyncratic N-alpha acetylation features.</title>
        <authorList>
            <person name="Bienvenut W.V."/>
            <person name="Sumpton D."/>
            <person name="Martinez A."/>
            <person name="Lilla S."/>
            <person name="Espagne C."/>
            <person name="Meinnel T."/>
            <person name="Giglione C."/>
        </authorList>
    </citation>
    <scope>ACETYLATION [LARGE SCALE ANALYSIS] AT ALA-24</scope>
    <scope>CLEAVAGE OF TRANSIT PEPTIDE [LARGE SCALE ANALYSIS] AFTER MET-23</scope>
    <scope>IDENTIFICATION BY MASS SPECTROMETRY [LARGE SCALE ANALYSIS]</scope>
</reference>
<comment type="catalytic activity">
    <reaction>
        <text>3-hydroxy-2-methylpropanoate + NAD(+) = 2-methyl-3-oxopropanoate + NADH + H(+)</text>
        <dbReference type="Rhea" id="RHEA:17681"/>
        <dbReference type="ChEBI" id="CHEBI:11805"/>
        <dbReference type="ChEBI" id="CHEBI:15378"/>
        <dbReference type="ChEBI" id="CHEBI:57540"/>
        <dbReference type="ChEBI" id="CHEBI:57700"/>
        <dbReference type="ChEBI" id="CHEBI:57945"/>
        <dbReference type="EC" id="1.1.1.31"/>
    </reaction>
</comment>
<comment type="pathway">
    <text>Amino-acid degradation; L-valine degradation.</text>
</comment>
<comment type="interaction">
    <interactant intactId="EBI-25528671">
        <id>Q9SZE1</id>
    </interactant>
    <interactant intactId="EBI-2363192">
        <id>Q8S8E3</id>
        <label>PYL6</label>
    </interactant>
    <organismsDiffer>false</organismsDiffer>
    <experiments>3</experiments>
</comment>
<comment type="interaction">
    <interactant intactId="EBI-25528671">
        <id>Q9SZE1</id>
    </interactant>
    <interactant intactId="EBI-2429535">
        <id>Q9FGM1</id>
        <label>PYL8</label>
    </interactant>
    <organismsDiffer>false</organismsDiffer>
    <experiments>3</experiments>
</comment>
<comment type="subcellular location">
    <subcellularLocation>
        <location evidence="1">Mitochondrion</location>
    </subcellularLocation>
</comment>
<comment type="alternative products">
    <event type="alternative initiation"/>
    <isoform>
        <id>Q9SZE1-1</id>
        <name>1</name>
        <sequence type="displayed"/>
    </isoform>
    <isoform>
        <id>Q9SZE1-2</id>
        <name>2</name>
        <sequence type="described" ref="VSP_057959"/>
    </isoform>
</comment>
<comment type="miscellaneous">
    <molecule>Isoform 2</molecule>
    <text evidence="3">Produced by alternative initiation at Met-23 of isoform 1.</text>
</comment>
<comment type="similarity">
    <text evidence="3">Belongs to the HIBADH-related family. 3-hydroxyisobutyrate dehydrogenase subfamily.</text>
</comment>